<proteinExistence type="inferred from homology"/>
<accession>Q8YF59</accession>
<sequence length="430" mass="46071">MVTTLRQTDPDFEQKFAAFLSGKREVSEDVDRAVREIVDRVRREGDSALLDYSRRFDRIDLEKTGIAVTEAEIDAAFDAAPASTVEALKLARDRIEKHHARQLPKDDRYTDALGVELGSRWTAIKAVGLYVPGGTASYPSSVLMNAMPAKVAGVDRIVMVVPAPDGNLNPLVLVAARLAGVSEIYRVGGAQAIAALAYGTETIRPVAKIVGPGNAYVAAAKRIVFGTVGIDMIAGPSEVLIVADKDNNPDWIAADLLAQAEHDTAAQSILMTNDEAFAHAVEEAVERQLHTLARTETASASWRDFGAVILVKDFEDAIPLANRIAAEHLEIAVADAEAFVPRIRNAGSIFIGGYTPEVIGDYVGGCNHVLPTARSARFSSGLSVLDYMKRTSLLKLGSEQLRALGPAAIEIARAEGLDAHAQSVAIRLNL</sequence>
<gene>
    <name evidence="1" type="primary">hisD</name>
    <name type="ordered locus">BMEI1668</name>
</gene>
<feature type="chain" id="PRO_0000135740" description="Histidinol dehydrogenase">
    <location>
        <begin position="1"/>
        <end position="430"/>
    </location>
</feature>
<feature type="active site" description="Proton acceptor" evidence="1">
    <location>
        <position position="327"/>
    </location>
</feature>
<feature type="active site" description="Proton acceptor" evidence="1">
    <location>
        <position position="328"/>
    </location>
</feature>
<feature type="binding site" evidence="1">
    <location>
        <position position="130"/>
    </location>
    <ligand>
        <name>NAD(+)</name>
        <dbReference type="ChEBI" id="CHEBI:57540"/>
    </ligand>
</feature>
<feature type="binding site" evidence="1">
    <location>
        <position position="191"/>
    </location>
    <ligand>
        <name>NAD(+)</name>
        <dbReference type="ChEBI" id="CHEBI:57540"/>
    </ligand>
</feature>
<feature type="binding site" evidence="1">
    <location>
        <position position="214"/>
    </location>
    <ligand>
        <name>NAD(+)</name>
        <dbReference type="ChEBI" id="CHEBI:57540"/>
    </ligand>
</feature>
<feature type="binding site" evidence="1">
    <location>
        <position position="237"/>
    </location>
    <ligand>
        <name>substrate</name>
    </ligand>
</feature>
<feature type="binding site" evidence="1">
    <location>
        <position position="259"/>
    </location>
    <ligand>
        <name>substrate</name>
    </ligand>
</feature>
<feature type="binding site" evidence="1">
    <location>
        <position position="259"/>
    </location>
    <ligand>
        <name>Zn(2+)</name>
        <dbReference type="ChEBI" id="CHEBI:29105"/>
    </ligand>
</feature>
<feature type="binding site" evidence="1">
    <location>
        <position position="262"/>
    </location>
    <ligand>
        <name>substrate</name>
    </ligand>
</feature>
<feature type="binding site" evidence="1">
    <location>
        <position position="262"/>
    </location>
    <ligand>
        <name>Zn(2+)</name>
        <dbReference type="ChEBI" id="CHEBI:29105"/>
    </ligand>
</feature>
<feature type="binding site" evidence="1">
    <location>
        <position position="328"/>
    </location>
    <ligand>
        <name>substrate</name>
    </ligand>
</feature>
<feature type="binding site" evidence="1">
    <location>
        <position position="361"/>
    </location>
    <ligand>
        <name>substrate</name>
    </ligand>
</feature>
<feature type="binding site" evidence="1">
    <location>
        <position position="361"/>
    </location>
    <ligand>
        <name>Zn(2+)</name>
        <dbReference type="ChEBI" id="CHEBI:29105"/>
    </ligand>
</feature>
<feature type="binding site" evidence="1">
    <location>
        <position position="415"/>
    </location>
    <ligand>
        <name>substrate</name>
    </ligand>
</feature>
<feature type="binding site" evidence="1">
    <location>
        <position position="420"/>
    </location>
    <ligand>
        <name>substrate</name>
    </ligand>
</feature>
<feature type="binding site" evidence="1">
    <location>
        <position position="420"/>
    </location>
    <ligand>
        <name>Zn(2+)</name>
        <dbReference type="ChEBI" id="CHEBI:29105"/>
    </ligand>
</feature>
<dbReference type="EC" id="1.1.1.23" evidence="1"/>
<dbReference type="EMBL" id="AE008917">
    <property type="protein sequence ID" value="AAL52849.1"/>
    <property type="molecule type" value="Genomic_DNA"/>
</dbReference>
<dbReference type="PIR" id="AF3460">
    <property type="entry name" value="AF3460"/>
</dbReference>
<dbReference type="RefSeq" id="WP_004684738.1">
    <property type="nucleotide sequence ID" value="NZ_GG703778.1"/>
</dbReference>
<dbReference type="SMR" id="Q8YF59"/>
<dbReference type="GeneID" id="29594523"/>
<dbReference type="KEGG" id="bme:BMEI1668"/>
<dbReference type="KEGG" id="bmel:DK63_1822"/>
<dbReference type="PATRIC" id="fig|224914.52.peg.1923"/>
<dbReference type="eggNOG" id="COG0141">
    <property type="taxonomic scope" value="Bacteria"/>
</dbReference>
<dbReference type="PhylomeDB" id="Q8YF59"/>
<dbReference type="UniPathway" id="UPA00031">
    <property type="reaction ID" value="UER00014"/>
</dbReference>
<dbReference type="Proteomes" id="UP000000419">
    <property type="component" value="Chromosome I"/>
</dbReference>
<dbReference type="GO" id="GO:0005829">
    <property type="term" value="C:cytosol"/>
    <property type="evidence" value="ECO:0007669"/>
    <property type="project" value="TreeGrafter"/>
</dbReference>
<dbReference type="GO" id="GO:0004399">
    <property type="term" value="F:histidinol dehydrogenase activity"/>
    <property type="evidence" value="ECO:0007669"/>
    <property type="project" value="UniProtKB-UniRule"/>
</dbReference>
<dbReference type="GO" id="GO:0051287">
    <property type="term" value="F:NAD binding"/>
    <property type="evidence" value="ECO:0007669"/>
    <property type="project" value="InterPro"/>
</dbReference>
<dbReference type="GO" id="GO:0008270">
    <property type="term" value="F:zinc ion binding"/>
    <property type="evidence" value="ECO:0007669"/>
    <property type="project" value="UniProtKB-UniRule"/>
</dbReference>
<dbReference type="GO" id="GO:0000105">
    <property type="term" value="P:L-histidine biosynthetic process"/>
    <property type="evidence" value="ECO:0007669"/>
    <property type="project" value="UniProtKB-UniRule"/>
</dbReference>
<dbReference type="CDD" id="cd06572">
    <property type="entry name" value="Histidinol_dh"/>
    <property type="match status" value="1"/>
</dbReference>
<dbReference type="FunFam" id="3.40.50.1980:FF:000001">
    <property type="entry name" value="Histidinol dehydrogenase"/>
    <property type="match status" value="1"/>
</dbReference>
<dbReference type="FunFam" id="3.40.50.1980:FF:000026">
    <property type="entry name" value="Histidinol dehydrogenase"/>
    <property type="match status" value="1"/>
</dbReference>
<dbReference type="FunFam" id="1.20.5.1300:FF:000002">
    <property type="entry name" value="Histidinol dehydrogenase, chloroplastic"/>
    <property type="match status" value="1"/>
</dbReference>
<dbReference type="Gene3D" id="1.20.5.1300">
    <property type="match status" value="1"/>
</dbReference>
<dbReference type="Gene3D" id="3.40.50.1980">
    <property type="entry name" value="Nitrogenase molybdenum iron protein domain"/>
    <property type="match status" value="2"/>
</dbReference>
<dbReference type="HAMAP" id="MF_01024">
    <property type="entry name" value="HisD"/>
    <property type="match status" value="1"/>
</dbReference>
<dbReference type="InterPro" id="IPR016161">
    <property type="entry name" value="Ald_DH/histidinol_DH"/>
</dbReference>
<dbReference type="InterPro" id="IPR001692">
    <property type="entry name" value="Histidinol_DH_CS"/>
</dbReference>
<dbReference type="InterPro" id="IPR022695">
    <property type="entry name" value="Histidinol_DH_monofunct"/>
</dbReference>
<dbReference type="InterPro" id="IPR012131">
    <property type="entry name" value="Hstdl_DH"/>
</dbReference>
<dbReference type="NCBIfam" id="TIGR00069">
    <property type="entry name" value="hisD"/>
    <property type="match status" value="1"/>
</dbReference>
<dbReference type="PANTHER" id="PTHR21256:SF2">
    <property type="entry name" value="HISTIDINE BIOSYNTHESIS TRIFUNCTIONAL PROTEIN"/>
    <property type="match status" value="1"/>
</dbReference>
<dbReference type="PANTHER" id="PTHR21256">
    <property type="entry name" value="HISTIDINOL DEHYDROGENASE HDH"/>
    <property type="match status" value="1"/>
</dbReference>
<dbReference type="Pfam" id="PF00815">
    <property type="entry name" value="Histidinol_dh"/>
    <property type="match status" value="1"/>
</dbReference>
<dbReference type="PIRSF" id="PIRSF000099">
    <property type="entry name" value="Histidinol_dh"/>
    <property type="match status" value="1"/>
</dbReference>
<dbReference type="PRINTS" id="PR00083">
    <property type="entry name" value="HOLDHDRGNASE"/>
</dbReference>
<dbReference type="SUPFAM" id="SSF53720">
    <property type="entry name" value="ALDH-like"/>
    <property type="match status" value="1"/>
</dbReference>
<dbReference type="PROSITE" id="PS00611">
    <property type="entry name" value="HISOL_DEHYDROGENASE"/>
    <property type="match status" value="1"/>
</dbReference>
<name>HISX_BRUME</name>
<comment type="function">
    <text evidence="1">Catalyzes the sequential NAD-dependent oxidations of L-histidinol to L-histidinaldehyde and then to L-histidine.</text>
</comment>
<comment type="catalytic activity">
    <reaction evidence="1">
        <text>L-histidinol + 2 NAD(+) + H2O = L-histidine + 2 NADH + 3 H(+)</text>
        <dbReference type="Rhea" id="RHEA:20641"/>
        <dbReference type="ChEBI" id="CHEBI:15377"/>
        <dbReference type="ChEBI" id="CHEBI:15378"/>
        <dbReference type="ChEBI" id="CHEBI:57540"/>
        <dbReference type="ChEBI" id="CHEBI:57595"/>
        <dbReference type="ChEBI" id="CHEBI:57699"/>
        <dbReference type="ChEBI" id="CHEBI:57945"/>
        <dbReference type="EC" id="1.1.1.23"/>
    </reaction>
</comment>
<comment type="cofactor">
    <cofactor evidence="1">
        <name>Zn(2+)</name>
        <dbReference type="ChEBI" id="CHEBI:29105"/>
    </cofactor>
    <text evidence="1">Binds 1 zinc ion per subunit.</text>
</comment>
<comment type="pathway">
    <text evidence="1">Amino-acid biosynthesis; L-histidine biosynthesis; L-histidine from 5-phospho-alpha-D-ribose 1-diphosphate: step 9/9.</text>
</comment>
<comment type="similarity">
    <text evidence="1">Belongs to the histidinol dehydrogenase family.</text>
</comment>
<keyword id="KW-0028">Amino-acid biosynthesis</keyword>
<keyword id="KW-0368">Histidine biosynthesis</keyword>
<keyword id="KW-0479">Metal-binding</keyword>
<keyword id="KW-0520">NAD</keyword>
<keyword id="KW-0560">Oxidoreductase</keyword>
<keyword id="KW-0862">Zinc</keyword>
<evidence type="ECO:0000255" key="1">
    <source>
        <dbReference type="HAMAP-Rule" id="MF_01024"/>
    </source>
</evidence>
<protein>
    <recommendedName>
        <fullName evidence="1">Histidinol dehydrogenase</fullName>
        <shortName evidence="1">HDH</shortName>
        <ecNumber evidence="1">1.1.1.23</ecNumber>
    </recommendedName>
</protein>
<organism>
    <name type="scientific">Brucella melitensis biotype 1 (strain ATCC 23456 / CCUG 17765 / NCTC 10094 / 16M)</name>
    <dbReference type="NCBI Taxonomy" id="224914"/>
    <lineage>
        <taxon>Bacteria</taxon>
        <taxon>Pseudomonadati</taxon>
        <taxon>Pseudomonadota</taxon>
        <taxon>Alphaproteobacteria</taxon>
        <taxon>Hyphomicrobiales</taxon>
        <taxon>Brucellaceae</taxon>
        <taxon>Brucella/Ochrobactrum group</taxon>
        <taxon>Brucella</taxon>
    </lineage>
</organism>
<reference key="1">
    <citation type="journal article" date="2002" name="Proc. Natl. Acad. Sci. U.S.A.">
        <title>The genome sequence of the facultative intracellular pathogen Brucella melitensis.</title>
        <authorList>
            <person name="DelVecchio V.G."/>
            <person name="Kapatral V."/>
            <person name="Redkar R.J."/>
            <person name="Patra G."/>
            <person name="Mujer C."/>
            <person name="Los T."/>
            <person name="Ivanova N."/>
            <person name="Anderson I."/>
            <person name="Bhattacharyya A."/>
            <person name="Lykidis A."/>
            <person name="Reznik G."/>
            <person name="Jablonski L."/>
            <person name="Larsen N."/>
            <person name="D'Souza M."/>
            <person name="Bernal A."/>
            <person name="Mazur M."/>
            <person name="Goltsman E."/>
            <person name="Selkov E."/>
            <person name="Elzer P.H."/>
            <person name="Hagius S."/>
            <person name="O'Callaghan D."/>
            <person name="Letesson J.-J."/>
            <person name="Haselkorn R."/>
            <person name="Kyrpides N.C."/>
            <person name="Overbeek R."/>
        </authorList>
    </citation>
    <scope>NUCLEOTIDE SEQUENCE [LARGE SCALE GENOMIC DNA]</scope>
    <source>
        <strain>ATCC 23456 / CCUG 17765 / NCTC 10094 / 16M</strain>
    </source>
</reference>